<gene>
    <name evidence="1" type="primary">proB</name>
    <name type="ordered locus">IL1985</name>
</gene>
<proteinExistence type="inferred from homology"/>
<accession>Q5QY57</accession>
<feature type="chain" id="PRO_0000109681" description="Glutamate 5-kinase">
    <location>
        <begin position="1"/>
        <end position="371"/>
    </location>
</feature>
<feature type="domain" description="PUA" evidence="1">
    <location>
        <begin position="275"/>
        <end position="354"/>
    </location>
</feature>
<feature type="binding site" evidence="1">
    <location>
        <position position="12"/>
    </location>
    <ligand>
        <name>ATP</name>
        <dbReference type="ChEBI" id="CHEBI:30616"/>
    </ligand>
</feature>
<feature type="binding site" evidence="1">
    <location>
        <position position="52"/>
    </location>
    <ligand>
        <name>substrate</name>
    </ligand>
</feature>
<feature type="binding site" evidence="1">
    <location>
        <position position="136"/>
    </location>
    <ligand>
        <name>substrate</name>
    </ligand>
</feature>
<feature type="binding site" evidence="1">
    <location>
        <position position="148"/>
    </location>
    <ligand>
        <name>substrate</name>
    </ligand>
</feature>
<feature type="binding site" evidence="1">
    <location>
        <begin position="168"/>
        <end position="169"/>
    </location>
    <ligand>
        <name>ATP</name>
        <dbReference type="ChEBI" id="CHEBI:30616"/>
    </ligand>
</feature>
<feature type="binding site" evidence="1">
    <location>
        <begin position="210"/>
        <end position="216"/>
    </location>
    <ligand>
        <name>ATP</name>
        <dbReference type="ChEBI" id="CHEBI:30616"/>
    </ligand>
</feature>
<evidence type="ECO:0000255" key="1">
    <source>
        <dbReference type="HAMAP-Rule" id="MF_00456"/>
    </source>
</evidence>
<sequence length="371" mass="40588">MKAPSWRRAVLKVGSALIAPDETGVSTKYLLPIARFINECRERGQEVVLVSSGSVAAGRKHFNFEHKKVPVAVRKAMSAVGQNEMMGYWSRFFDSPCAQLLMTHSDLRDRARYVSIKNTLNRLLEHDILPVVNENDALATDEMKVGDNDNLSAMIATLVDADALFICSDIDGLYDSDPNLNPDAKKIPVVEQIDESIYSLAGGSVSSVGTGGMRTKVEAAEKATSHGIDTYIVNGRKGETFESLLQGDIPGTLFRRQSDPISNKKHWLRHTLVAQGEILVDEGAEKALIENGASLLSSGIVDVQGDFDRGDAVLVRSANDTDAIAKGICQYSAHELMHIKGQQTEDIAEKFGYSPITEVIHRDDLMILEDS</sequence>
<protein>
    <recommendedName>
        <fullName evidence="1">Glutamate 5-kinase</fullName>
        <ecNumber evidence="1">2.7.2.11</ecNumber>
    </recommendedName>
    <alternativeName>
        <fullName evidence="1">Gamma-glutamyl kinase</fullName>
        <shortName evidence="1">GK</shortName>
    </alternativeName>
</protein>
<dbReference type="EC" id="2.7.2.11" evidence="1"/>
<dbReference type="EMBL" id="AE017340">
    <property type="protein sequence ID" value="AAV82817.1"/>
    <property type="molecule type" value="Genomic_DNA"/>
</dbReference>
<dbReference type="RefSeq" id="WP_011235213.1">
    <property type="nucleotide sequence ID" value="NC_006512.1"/>
</dbReference>
<dbReference type="SMR" id="Q5QY57"/>
<dbReference type="STRING" id="283942.IL1985"/>
<dbReference type="GeneID" id="41337175"/>
<dbReference type="KEGG" id="ilo:IL1985"/>
<dbReference type="eggNOG" id="COG0263">
    <property type="taxonomic scope" value="Bacteria"/>
</dbReference>
<dbReference type="HOGENOM" id="CLU_025400_2_0_6"/>
<dbReference type="OrthoDB" id="9804434at2"/>
<dbReference type="UniPathway" id="UPA00098">
    <property type="reaction ID" value="UER00359"/>
</dbReference>
<dbReference type="Proteomes" id="UP000001171">
    <property type="component" value="Chromosome"/>
</dbReference>
<dbReference type="GO" id="GO:0005829">
    <property type="term" value="C:cytosol"/>
    <property type="evidence" value="ECO:0007669"/>
    <property type="project" value="TreeGrafter"/>
</dbReference>
<dbReference type="GO" id="GO:0005524">
    <property type="term" value="F:ATP binding"/>
    <property type="evidence" value="ECO:0007669"/>
    <property type="project" value="UniProtKB-KW"/>
</dbReference>
<dbReference type="GO" id="GO:0004349">
    <property type="term" value="F:glutamate 5-kinase activity"/>
    <property type="evidence" value="ECO:0007669"/>
    <property type="project" value="UniProtKB-UniRule"/>
</dbReference>
<dbReference type="GO" id="GO:0003723">
    <property type="term" value="F:RNA binding"/>
    <property type="evidence" value="ECO:0007669"/>
    <property type="project" value="InterPro"/>
</dbReference>
<dbReference type="GO" id="GO:0055129">
    <property type="term" value="P:L-proline biosynthetic process"/>
    <property type="evidence" value="ECO:0007669"/>
    <property type="project" value="UniProtKB-UniRule"/>
</dbReference>
<dbReference type="CDD" id="cd04242">
    <property type="entry name" value="AAK_G5K_ProB"/>
    <property type="match status" value="1"/>
</dbReference>
<dbReference type="CDD" id="cd21157">
    <property type="entry name" value="PUA_G5K"/>
    <property type="match status" value="1"/>
</dbReference>
<dbReference type="FunFam" id="2.30.130.10:FF:000007">
    <property type="entry name" value="Glutamate 5-kinase"/>
    <property type="match status" value="1"/>
</dbReference>
<dbReference type="FunFam" id="3.40.1160.10:FF:000018">
    <property type="entry name" value="Glutamate 5-kinase"/>
    <property type="match status" value="1"/>
</dbReference>
<dbReference type="Gene3D" id="3.40.1160.10">
    <property type="entry name" value="Acetylglutamate kinase-like"/>
    <property type="match status" value="1"/>
</dbReference>
<dbReference type="Gene3D" id="2.30.130.10">
    <property type="entry name" value="PUA domain"/>
    <property type="match status" value="1"/>
</dbReference>
<dbReference type="HAMAP" id="MF_00456">
    <property type="entry name" value="ProB"/>
    <property type="match status" value="1"/>
</dbReference>
<dbReference type="InterPro" id="IPR036393">
    <property type="entry name" value="AceGlu_kinase-like_sf"/>
</dbReference>
<dbReference type="InterPro" id="IPR001048">
    <property type="entry name" value="Asp/Glu/Uridylate_kinase"/>
</dbReference>
<dbReference type="InterPro" id="IPR041739">
    <property type="entry name" value="G5K_ProB"/>
</dbReference>
<dbReference type="InterPro" id="IPR001057">
    <property type="entry name" value="Glu/AcGlu_kinase"/>
</dbReference>
<dbReference type="InterPro" id="IPR011529">
    <property type="entry name" value="Glu_5kinase"/>
</dbReference>
<dbReference type="InterPro" id="IPR005715">
    <property type="entry name" value="Glu_5kinase/COase_Synthase"/>
</dbReference>
<dbReference type="InterPro" id="IPR019797">
    <property type="entry name" value="Glutamate_5-kinase_CS"/>
</dbReference>
<dbReference type="InterPro" id="IPR002478">
    <property type="entry name" value="PUA"/>
</dbReference>
<dbReference type="InterPro" id="IPR015947">
    <property type="entry name" value="PUA-like_sf"/>
</dbReference>
<dbReference type="InterPro" id="IPR036974">
    <property type="entry name" value="PUA_sf"/>
</dbReference>
<dbReference type="InterPro" id="IPR004521">
    <property type="entry name" value="Uncharacterised_CHP00451"/>
</dbReference>
<dbReference type="NCBIfam" id="TIGR01027">
    <property type="entry name" value="proB"/>
    <property type="match status" value="1"/>
</dbReference>
<dbReference type="NCBIfam" id="TIGR00451">
    <property type="entry name" value="unchar_dom_2"/>
    <property type="match status" value="1"/>
</dbReference>
<dbReference type="PANTHER" id="PTHR43654">
    <property type="entry name" value="GLUTAMATE 5-KINASE"/>
    <property type="match status" value="1"/>
</dbReference>
<dbReference type="PANTHER" id="PTHR43654:SF1">
    <property type="entry name" value="ISOPENTENYL PHOSPHATE KINASE"/>
    <property type="match status" value="1"/>
</dbReference>
<dbReference type="Pfam" id="PF00696">
    <property type="entry name" value="AA_kinase"/>
    <property type="match status" value="1"/>
</dbReference>
<dbReference type="Pfam" id="PF01472">
    <property type="entry name" value="PUA"/>
    <property type="match status" value="1"/>
</dbReference>
<dbReference type="PIRSF" id="PIRSF000729">
    <property type="entry name" value="GK"/>
    <property type="match status" value="1"/>
</dbReference>
<dbReference type="PRINTS" id="PR00474">
    <property type="entry name" value="GLU5KINASE"/>
</dbReference>
<dbReference type="SMART" id="SM00359">
    <property type="entry name" value="PUA"/>
    <property type="match status" value="1"/>
</dbReference>
<dbReference type="SUPFAM" id="SSF53633">
    <property type="entry name" value="Carbamate kinase-like"/>
    <property type="match status" value="1"/>
</dbReference>
<dbReference type="SUPFAM" id="SSF88697">
    <property type="entry name" value="PUA domain-like"/>
    <property type="match status" value="1"/>
</dbReference>
<dbReference type="PROSITE" id="PS00902">
    <property type="entry name" value="GLUTAMATE_5_KINASE"/>
    <property type="match status" value="1"/>
</dbReference>
<dbReference type="PROSITE" id="PS50890">
    <property type="entry name" value="PUA"/>
    <property type="match status" value="1"/>
</dbReference>
<organism>
    <name type="scientific">Idiomarina loihiensis (strain ATCC BAA-735 / DSM 15497 / L2-TR)</name>
    <dbReference type="NCBI Taxonomy" id="283942"/>
    <lineage>
        <taxon>Bacteria</taxon>
        <taxon>Pseudomonadati</taxon>
        <taxon>Pseudomonadota</taxon>
        <taxon>Gammaproteobacteria</taxon>
        <taxon>Alteromonadales</taxon>
        <taxon>Idiomarinaceae</taxon>
        <taxon>Idiomarina</taxon>
    </lineage>
</organism>
<comment type="function">
    <text evidence="1">Catalyzes the transfer of a phosphate group to glutamate to form L-glutamate 5-phosphate.</text>
</comment>
<comment type="catalytic activity">
    <reaction evidence="1">
        <text>L-glutamate + ATP = L-glutamyl 5-phosphate + ADP</text>
        <dbReference type="Rhea" id="RHEA:14877"/>
        <dbReference type="ChEBI" id="CHEBI:29985"/>
        <dbReference type="ChEBI" id="CHEBI:30616"/>
        <dbReference type="ChEBI" id="CHEBI:58274"/>
        <dbReference type="ChEBI" id="CHEBI:456216"/>
        <dbReference type="EC" id="2.7.2.11"/>
    </reaction>
</comment>
<comment type="pathway">
    <text evidence="1">Amino-acid biosynthesis; L-proline biosynthesis; L-glutamate 5-semialdehyde from L-glutamate: step 1/2.</text>
</comment>
<comment type="subcellular location">
    <subcellularLocation>
        <location evidence="1">Cytoplasm</location>
    </subcellularLocation>
</comment>
<comment type="similarity">
    <text evidence="1">Belongs to the glutamate 5-kinase family.</text>
</comment>
<keyword id="KW-0028">Amino-acid biosynthesis</keyword>
<keyword id="KW-0067">ATP-binding</keyword>
<keyword id="KW-0963">Cytoplasm</keyword>
<keyword id="KW-0418">Kinase</keyword>
<keyword id="KW-0547">Nucleotide-binding</keyword>
<keyword id="KW-0641">Proline biosynthesis</keyword>
<keyword id="KW-1185">Reference proteome</keyword>
<keyword id="KW-0808">Transferase</keyword>
<reference key="1">
    <citation type="journal article" date="2004" name="Proc. Natl. Acad. Sci. U.S.A.">
        <title>Genome sequence of the deep-sea gamma-proteobacterium Idiomarina loihiensis reveals amino acid fermentation as a source of carbon and energy.</title>
        <authorList>
            <person name="Hou S."/>
            <person name="Saw J.H."/>
            <person name="Lee K.S."/>
            <person name="Freitas T.A."/>
            <person name="Belisle C."/>
            <person name="Kawarabayasi Y."/>
            <person name="Donachie S.P."/>
            <person name="Pikina A."/>
            <person name="Galperin M.Y."/>
            <person name="Koonin E.V."/>
            <person name="Makarova K.S."/>
            <person name="Omelchenko M.V."/>
            <person name="Sorokin A."/>
            <person name="Wolf Y.I."/>
            <person name="Li Q.X."/>
            <person name="Keum Y.S."/>
            <person name="Campbell S."/>
            <person name="Denery J."/>
            <person name="Aizawa S."/>
            <person name="Shibata S."/>
            <person name="Malahoff A."/>
            <person name="Alam M."/>
        </authorList>
    </citation>
    <scope>NUCLEOTIDE SEQUENCE [LARGE SCALE GENOMIC DNA]</scope>
    <source>
        <strain>ATCC BAA-735 / DSM 15497 / L2-TR</strain>
    </source>
</reference>
<name>PROB_IDILO</name>